<dbReference type="EC" id="1.10.3.16" evidence="2"/>
<dbReference type="EMBL" id="CP000152">
    <property type="protein sequence ID" value="ABB11686.1"/>
    <property type="molecule type" value="Genomic_DNA"/>
</dbReference>
<dbReference type="RefSeq" id="WP_011355175.1">
    <property type="nucleotide sequence ID" value="NC_007511.1"/>
</dbReference>
<dbReference type="PDB" id="4HMW">
    <property type="method" value="X-ray"/>
    <property type="resolution" value="1.53 A"/>
    <property type="chains" value="A/B=1-212"/>
</dbReference>
<dbReference type="PDB" id="4HMX">
    <property type="method" value="X-ray"/>
    <property type="resolution" value="1.59 A"/>
    <property type="chains" value="A/B=1-212"/>
</dbReference>
<dbReference type="PDBsum" id="4HMW"/>
<dbReference type="PDBsum" id="4HMX"/>
<dbReference type="SMR" id="Q396C5"/>
<dbReference type="GeneID" id="45097913"/>
<dbReference type="KEGG" id="bur:Bcep18194_B1572"/>
<dbReference type="PATRIC" id="fig|482957.22.peg.5285"/>
<dbReference type="HOGENOM" id="CLU_032263_2_3_4"/>
<dbReference type="BRENDA" id="1.10.3.16">
    <property type="organism ID" value="13531"/>
</dbReference>
<dbReference type="UniPathway" id="UPA00099"/>
<dbReference type="EvolutionaryTrace" id="Q396C5"/>
<dbReference type="Proteomes" id="UP000002705">
    <property type="component" value="Chromosome 2"/>
</dbReference>
<dbReference type="GO" id="GO:0010181">
    <property type="term" value="F:FMN binding"/>
    <property type="evidence" value="ECO:0007669"/>
    <property type="project" value="InterPro"/>
</dbReference>
<dbReference type="GO" id="GO:0004733">
    <property type="term" value="F:pyridoxamine phosphate oxidase activity"/>
    <property type="evidence" value="ECO:0007669"/>
    <property type="project" value="InterPro"/>
</dbReference>
<dbReference type="GO" id="GO:0002047">
    <property type="term" value="P:phenazine biosynthetic process"/>
    <property type="evidence" value="ECO:0007669"/>
    <property type="project" value="UniProtKB-UniPathway"/>
</dbReference>
<dbReference type="GO" id="GO:0008615">
    <property type="term" value="P:pyridoxine biosynthetic process"/>
    <property type="evidence" value="ECO:0007669"/>
    <property type="project" value="InterPro"/>
</dbReference>
<dbReference type="Gene3D" id="2.30.110.10">
    <property type="entry name" value="Electron Transport, Fmn-binding Protein, Chain A"/>
    <property type="match status" value="1"/>
</dbReference>
<dbReference type="InterPro" id="IPR053451">
    <property type="entry name" value="Phenazine_biosynth_oxidase"/>
</dbReference>
<dbReference type="InterPro" id="IPR000659">
    <property type="entry name" value="Pyridox_Oxase"/>
</dbReference>
<dbReference type="InterPro" id="IPR011576">
    <property type="entry name" value="Pyridox_Oxase_N"/>
</dbReference>
<dbReference type="InterPro" id="IPR019576">
    <property type="entry name" value="Pyridoxamine_oxidase_dimer_C"/>
</dbReference>
<dbReference type="InterPro" id="IPR012349">
    <property type="entry name" value="Split_barrel_FMN-bd"/>
</dbReference>
<dbReference type="NCBIfam" id="NF038138">
    <property type="entry name" value="phena_PhzG"/>
    <property type="match status" value="1"/>
</dbReference>
<dbReference type="NCBIfam" id="NF004231">
    <property type="entry name" value="PRK05679.1"/>
    <property type="match status" value="1"/>
</dbReference>
<dbReference type="PANTHER" id="PTHR10851:SF0">
    <property type="entry name" value="PYRIDOXINE-5'-PHOSPHATE OXIDASE"/>
    <property type="match status" value="1"/>
</dbReference>
<dbReference type="PANTHER" id="PTHR10851">
    <property type="entry name" value="PYRIDOXINE-5-PHOSPHATE OXIDASE"/>
    <property type="match status" value="1"/>
</dbReference>
<dbReference type="Pfam" id="PF10590">
    <property type="entry name" value="PNP_phzG_C"/>
    <property type="match status" value="1"/>
</dbReference>
<dbReference type="Pfam" id="PF01243">
    <property type="entry name" value="PNPOx_N"/>
    <property type="match status" value="1"/>
</dbReference>
<dbReference type="PIRSF" id="PIRSF000190">
    <property type="entry name" value="Pyd_amn-ph_oxd"/>
    <property type="match status" value="1"/>
</dbReference>
<dbReference type="SUPFAM" id="SSF50475">
    <property type="entry name" value="FMN-binding split barrel"/>
    <property type="match status" value="1"/>
</dbReference>
<name>PHZG_BURL3</name>
<accession>Q396C5</accession>
<keyword id="KW-0002">3D-structure</keyword>
<keyword id="KW-0045">Antibiotic biosynthesis</keyword>
<keyword id="KW-0285">Flavoprotein</keyword>
<keyword id="KW-0288">FMN</keyword>
<keyword id="KW-0560">Oxidoreductase</keyword>
<keyword id="KW-0843">Virulence</keyword>
<proteinExistence type="evidence at protein level"/>
<evidence type="ECO:0000250" key="1">
    <source>
        <dbReference type="UniProtKB" id="Q51793"/>
    </source>
</evidence>
<evidence type="ECO:0000269" key="2">
    <source>
    </source>
</evidence>
<evidence type="ECO:0000303" key="3">
    <source>
    </source>
</evidence>
<evidence type="ECO:0000305" key="4"/>
<evidence type="ECO:0000312" key="5">
    <source>
        <dbReference type="EMBL" id="ABB11686.1"/>
    </source>
</evidence>
<evidence type="ECO:0007744" key="6">
    <source>
        <dbReference type="PDB" id="4HMW"/>
    </source>
</evidence>
<evidence type="ECO:0007744" key="7">
    <source>
        <dbReference type="PDB" id="4HMX"/>
    </source>
</evidence>
<evidence type="ECO:0007829" key="8">
    <source>
        <dbReference type="PDB" id="4HMW"/>
    </source>
</evidence>
<feature type="chain" id="PRO_0000452088" description="Dihydrophenazinedicarboxylate synthase">
    <location>
        <begin position="1"/>
        <end position="212"/>
    </location>
</feature>
<feature type="binding site" evidence="1">
    <location>
        <position position="8"/>
    </location>
    <ligand>
        <name>substrate</name>
    </ligand>
</feature>
<feature type="binding site" evidence="2 6 7">
    <location>
        <begin position="63"/>
        <end position="66"/>
    </location>
    <ligand>
        <name>FMN</name>
        <dbReference type="ChEBI" id="CHEBI:58210"/>
    </ligand>
</feature>
<feature type="binding site" evidence="2 6 7">
    <location>
        <begin position="78"/>
        <end position="79"/>
    </location>
    <ligand>
        <name>FMN</name>
        <dbReference type="ChEBI" id="CHEBI:58210"/>
    </ligand>
</feature>
<feature type="binding site" evidence="1">
    <location>
        <position position="80"/>
    </location>
    <ligand>
        <name>substrate</name>
    </ligand>
</feature>
<feature type="binding site" evidence="2 6 7">
    <location>
        <begin position="84"/>
        <end position="85"/>
    </location>
    <ligand>
        <name>FMN</name>
        <dbReference type="ChEBI" id="CHEBI:58210"/>
    </ligand>
</feature>
<feature type="binding site" evidence="2 6 7">
    <location>
        <position position="107"/>
    </location>
    <ligand>
        <name>FMN</name>
        <dbReference type="ChEBI" id="CHEBI:58210"/>
    </ligand>
</feature>
<feature type="binding site" evidence="1">
    <location>
        <position position="129"/>
    </location>
    <ligand>
        <name>substrate</name>
    </ligand>
</feature>
<feature type="binding site" evidence="1">
    <location>
        <position position="137"/>
    </location>
    <ligand>
        <name>substrate</name>
    </ligand>
</feature>
<feature type="binding site" evidence="2 6 7">
    <location>
        <begin position="142"/>
        <end position="143"/>
    </location>
    <ligand>
        <name>FMN</name>
        <dbReference type="ChEBI" id="CHEBI:58210"/>
    </ligand>
</feature>
<feature type="binding site" evidence="2 6 7">
    <location>
        <position position="195"/>
    </location>
    <ligand>
        <name>FMN</name>
        <dbReference type="ChEBI" id="CHEBI:58210"/>
    </ligand>
</feature>
<feature type="helix" evidence="8">
    <location>
        <begin position="18"/>
        <end position="20"/>
    </location>
</feature>
<feature type="helix" evidence="8">
    <location>
        <begin position="27"/>
        <end position="40"/>
    </location>
</feature>
<feature type="strand" evidence="8">
    <location>
        <begin position="48"/>
        <end position="54"/>
    </location>
</feature>
<feature type="strand" evidence="8">
    <location>
        <begin position="60"/>
        <end position="66"/>
    </location>
</feature>
<feature type="strand" evidence="8">
    <location>
        <begin position="69"/>
        <end position="71"/>
    </location>
</feature>
<feature type="strand" evidence="8">
    <location>
        <begin position="74"/>
        <end position="80"/>
    </location>
</feature>
<feature type="helix" evidence="8">
    <location>
        <begin position="84"/>
        <end position="92"/>
    </location>
</feature>
<feature type="strand" evidence="8">
    <location>
        <begin position="94"/>
        <end position="101"/>
    </location>
</feature>
<feature type="turn" evidence="8">
    <location>
        <begin position="102"/>
        <end position="105"/>
    </location>
</feature>
<feature type="strand" evidence="8">
    <location>
        <begin position="106"/>
        <end position="116"/>
    </location>
</feature>
<feature type="helix" evidence="8">
    <location>
        <begin position="119"/>
        <end position="127"/>
    </location>
</feature>
<feature type="helix" evidence="8">
    <location>
        <begin position="131"/>
        <end position="139"/>
    </location>
</feature>
<feature type="helix" evidence="8">
    <location>
        <begin position="149"/>
        <end position="161"/>
    </location>
</feature>
<feature type="strand" evidence="8">
    <location>
        <begin position="172"/>
        <end position="186"/>
    </location>
</feature>
<feature type="strand" evidence="8">
    <location>
        <begin position="194"/>
        <end position="201"/>
    </location>
</feature>
<feature type="strand" evidence="8">
    <location>
        <begin position="204"/>
        <end position="210"/>
    </location>
</feature>
<organism>
    <name type="scientific">Burkholderia lata (strain ATCC 17760 / DSM 23089 / LMG 22485 / NCIMB 9086 / R18194 / 383)</name>
    <dbReference type="NCBI Taxonomy" id="482957"/>
    <lineage>
        <taxon>Bacteria</taxon>
        <taxon>Pseudomonadati</taxon>
        <taxon>Pseudomonadota</taxon>
        <taxon>Betaproteobacteria</taxon>
        <taxon>Burkholderiales</taxon>
        <taxon>Burkholderiaceae</taxon>
        <taxon>Burkholderia</taxon>
        <taxon>Burkholderia cepacia complex</taxon>
    </lineage>
</organism>
<reference key="1">
    <citation type="submission" date="2005-10" db="EMBL/GenBank/DDBJ databases">
        <title>Complete sequence of chromosome 2 of Burkholderia sp. 383.</title>
        <authorList>
            <consortium name="US DOE Joint Genome Institute"/>
            <person name="Copeland A."/>
            <person name="Lucas S."/>
            <person name="Lapidus A."/>
            <person name="Barry K."/>
            <person name="Detter J.C."/>
            <person name="Glavina T."/>
            <person name="Hammon N."/>
            <person name="Israni S."/>
            <person name="Pitluck S."/>
            <person name="Chain P."/>
            <person name="Malfatti S."/>
            <person name="Shin M."/>
            <person name="Vergez L."/>
            <person name="Schmutz J."/>
            <person name="Larimer F."/>
            <person name="Land M."/>
            <person name="Kyrpides N."/>
            <person name="Lykidis A."/>
            <person name="Richardson P."/>
        </authorList>
    </citation>
    <scope>NUCLEOTIDE SEQUENCE [LARGE SCALE GENOMIC DNA]</scope>
    <source>
        <strain>ATCC 17760 / DSM 23089 / LMG 22485 / NCIMB 9086 / R18194 / 383</strain>
    </source>
</reference>
<reference evidence="6 7" key="2">
    <citation type="journal article" date="2013" name="Acta Crystallogr. D">
        <title>Trapped intermediates in crystals of the FMN-dependent oxidase PhzG provide insight into the final steps of phenazine biosynthesis.</title>
        <authorList>
            <person name="Xu N."/>
            <person name="Ahuja E.G."/>
            <person name="Janning P."/>
            <person name="Mavrodi D.V."/>
            <person name="Thomashow L.S."/>
            <person name="Blankenfeldt W."/>
        </authorList>
    </citation>
    <scope>X-RAY CRYSTALLOGRAPHY (1.53 ANGSTROMS) IN COMPLEX WITH FMN AND TRAPPED UNSTABLE INTERMEDIATE</scope>
    <scope>FUNCTION</scope>
    <scope>CATALYTIC ACTIVITY</scope>
    <scope>COFACTOR</scope>
    <scope>PATHWAY</scope>
    <source>
        <strain>ATCC 17760 / DSM 23089 / LMG 22485 / NCIMB 9086 / R18194 / 383</strain>
    </source>
</reference>
<protein>
    <recommendedName>
        <fullName evidence="4">Dihydrophenazinedicarboxylate synthase</fullName>
        <ecNumber evidence="2">1.10.3.16</ecNumber>
    </recommendedName>
</protein>
<comment type="function">
    <text evidence="2">Involved in the biosynthesis of the antibiotic phenazine, a nitrogen-containing heterocyclic molecule having important roles in virulence, competition and biological control (PubMed:23897464). Catalyzes several oxidations in the terminal steps of core phenazine biosynthesis. It oxidizes both hexahydrophenazine-1,6-dicarboxylic acid (HHPDC) and tetrahydrophenazine-1-carboxylic acid (THPCA) and thereby contributes to the generation of both phenazine-1,6-dicarboxylic acid (PDC) and phenazine-1-carboxylic acid (PCA). It synthesizes phenazines in their reduced form, which are the likely end products in vivo (PubMed:23897464).</text>
</comment>
<comment type="catalytic activity">
    <reaction evidence="2">
        <text>(1R,6R)-1,4,5,5a,6,9-hexahydrophenazine-1,6-dicarboxylate + O2 = (1R,10aS)-1,4,10,10a-tetrahydrophenazine-1,6-dicarboxylate + H2O2</text>
        <dbReference type="Rhea" id="RHEA:49888"/>
        <dbReference type="ChEBI" id="CHEBI:15379"/>
        <dbReference type="ChEBI" id="CHEBI:16240"/>
        <dbReference type="ChEBI" id="CHEBI:131971"/>
        <dbReference type="ChEBI" id="CHEBI:131973"/>
        <dbReference type="EC" id="1.10.3.16"/>
    </reaction>
    <physiologicalReaction direction="left-to-right" evidence="2">
        <dbReference type="Rhea" id="RHEA:49889"/>
    </physiologicalReaction>
</comment>
<comment type="catalytic activity">
    <reaction evidence="2">
        <text>(1R,10aS)-1,4,10,10a-tetrahydrophenazine-1,6-dicarboxylate + O2 = (5aS)-5,5a-dihydrophenazine-1,6-dicarboxylate + H2O2</text>
        <dbReference type="Rhea" id="RHEA:49892"/>
        <dbReference type="ChEBI" id="CHEBI:15379"/>
        <dbReference type="ChEBI" id="CHEBI:16240"/>
        <dbReference type="ChEBI" id="CHEBI:131973"/>
        <dbReference type="ChEBI" id="CHEBI:131978"/>
        <dbReference type="EC" id="1.10.3.16"/>
    </reaction>
    <physiologicalReaction direction="left-to-right" evidence="2">
        <dbReference type="Rhea" id="RHEA:49893"/>
    </physiologicalReaction>
</comment>
<comment type="catalytic activity">
    <reaction evidence="2">
        <text>(1R,10aS)-1,4,10,10a-tetrahydrophenazine-1-carboxylate + O2 = (10aS)-10,10a-dihydrophenazine-1-carboxylate + H2O2</text>
        <dbReference type="Rhea" id="RHEA:49940"/>
        <dbReference type="ChEBI" id="CHEBI:15379"/>
        <dbReference type="ChEBI" id="CHEBI:16240"/>
        <dbReference type="ChEBI" id="CHEBI:131981"/>
        <dbReference type="ChEBI" id="CHEBI:132003"/>
        <dbReference type="EC" id="1.10.3.16"/>
    </reaction>
    <physiologicalReaction direction="left-to-right" evidence="2">
        <dbReference type="Rhea" id="RHEA:49941"/>
    </physiologicalReaction>
</comment>
<comment type="catalytic activity">
    <reaction evidence="2">
        <text>(1R)-1,4,5,10-tetrahydrophenazine-1-carboxylate + O2 = (10aS)-10,10a-dihydrophenazine-1-carboxylate + H2O2</text>
        <dbReference type="Rhea" id="RHEA:49948"/>
        <dbReference type="ChEBI" id="CHEBI:15379"/>
        <dbReference type="ChEBI" id="CHEBI:16240"/>
        <dbReference type="ChEBI" id="CHEBI:132003"/>
        <dbReference type="ChEBI" id="CHEBI:132005"/>
        <dbReference type="EC" id="1.10.3.16"/>
    </reaction>
    <physiologicalReaction direction="left-to-right" evidence="2">
        <dbReference type="Rhea" id="RHEA:49949"/>
    </physiologicalReaction>
</comment>
<comment type="cofactor">
    <cofactor evidence="2">
        <name>FMN</name>
        <dbReference type="ChEBI" id="CHEBI:58210"/>
    </cofactor>
    <text evidence="2">Binds 1 FMN per subunit.</text>
</comment>
<comment type="pathway">
    <text evidence="2">Antibiotic biosynthesis; phenazine biosynthesis.</text>
</comment>
<comment type="similarity">
    <text evidence="4">Belongs to the pyridoxamine 5'-phosphate oxidase family.</text>
</comment>
<gene>
    <name evidence="3" type="primary">phzG</name>
    <name evidence="5" type="ordered locus">Bcep18194_B1572</name>
</gene>
<sequence>MNTSRFESLTGSVDVLFPEYDDPPSEPITLLKRWLATADVARVREPKALALATATSDGRISSRVIAFSSIDDRGVIFCTHSTSRKGRELTETGWASGLLYWRETGQQIMISGQAVPLEESENDKLWFGRSVPMHAMSSASHQSDELVDREALRAHAAELLALGVALPRPPRFVGYRLEPHEMEFWAASSDRLHRRLRYERDGNDWKTTQLQP</sequence>